<accession>Q12344</accession>
<accession>D6W3C2</accession>
<evidence type="ECO:0000255" key="1"/>
<evidence type="ECO:0000255" key="2">
    <source>
        <dbReference type="PROSITE-ProRule" id="PRU00163"/>
    </source>
</evidence>
<evidence type="ECO:0000256" key="3">
    <source>
        <dbReference type="SAM" id="MobiDB-lite"/>
    </source>
</evidence>
<evidence type="ECO:0000269" key="4">
    <source>
    </source>
</evidence>
<evidence type="ECO:0000269" key="5">
    <source>
    </source>
</evidence>
<evidence type="ECO:0000269" key="6">
    <source>
    </source>
</evidence>
<evidence type="ECO:0000269" key="7">
    <source>
    </source>
</evidence>
<evidence type="ECO:0000269" key="8">
    <source>
    </source>
</evidence>
<evidence type="ECO:0000305" key="9"/>
<evidence type="ECO:0007744" key="10">
    <source>
    </source>
</evidence>
<evidence type="ECO:0007744" key="11">
    <source>
    </source>
</evidence>
<reference key="1">
    <citation type="journal article" date="1997" name="Nature">
        <title>The nucleotide sequence of Saccharomyces cerevisiae chromosome XVI.</title>
        <authorList>
            <person name="Bussey H."/>
            <person name="Storms R.K."/>
            <person name="Ahmed A."/>
            <person name="Albermann K."/>
            <person name="Allen E."/>
            <person name="Ansorge W."/>
            <person name="Araujo R."/>
            <person name="Aparicio A."/>
            <person name="Barrell B.G."/>
            <person name="Badcock K."/>
            <person name="Benes V."/>
            <person name="Botstein D."/>
            <person name="Bowman S."/>
            <person name="Brueckner M."/>
            <person name="Carpenter J."/>
            <person name="Cherry J.M."/>
            <person name="Chung E."/>
            <person name="Churcher C.M."/>
            <person name="Coster F."/>
            <person name="Davis K."/>
            <person name="Davis R.W."/>
            <person name="Dietrich F.S."/>
            <person name="Delius H."/>
            <person name="DiPaolo T."/>
            <person name="Dubois E."/>
            <person name="Duesterhoeft A."/>
            <person name="Duncan M."/>
            <person name="Floeth M."/>
            <person name="Fortin N."/>
            <person name="Friesen J.D."/>
            <person name="Fritz C."/>
            <person name="Goffeau A."/>
            <person name="Hall J."/>
            <person name="Hebling U."/>
            <person name="Heumann K."/>
            <person name="Hilbert H."/>
            <person name="Hillier L.W."/>
            <person name="Hunicke-Smith S."/>
            <person name="Hyman R.W."/>
            <person name="Johnston M."/>
            <person name="Kalman S."/>
            <person name="Kleine K."/>
            <person name="Komp C."/>
            <person name="Kurdi O."/>
            <person name="Lashkari D."/>
            <person name="Lew H."/>
            <person name="Lin A."/>
            <person name="Lin D."/>
            <person name="Louis E.J."/>
            <person name="Marathe R."/>
            <person name="Messenguy F."/>
            <person name="Mewes H.-W."/>
            <person name="Mirtipati S."/>
            <person name="Moestl D."/>
            <person name="Mueller-Auer S."/>
            <person name="Namath A."/>
            <person name="Nentwich U."/>
            <person name="Oefner P."/>
            <person name="Pearson D."/>
            <person name="Petel F.X."/>
            <person name="Pohl T.M."/>
            <person name="Purnelle B."/>
            <person name="Rajandream M.A."/>
            <person name="Rechmann S."/>
            <person name="Rieger M."/>
            <person name="Riles L."/>
            <person name="Roberts D."/>
            <person name="Schaefer M."/>
            <person name="Scharfe M."/>
            <person name="Scherens B."/>
            <person name="Schramm S."/>
            <person name="Schroeder M."/>
            <person name="Sdicu A.-M."/>
            <person name="Tettelin H."/>
            <person name="Urrestarazu L.A."/>
            <person name="Ushinsky S."/>
            <person name="Vierendeels F."/>
            <person name="Vissers S."/>
            <person name="Voss H."/>
            <person name="Walsh S.V."/>
            <person name="Wambutt R."/>
            <person name="Wang Y."/>
            <person name="Wedler E."/>
            <person name="Wedler H."/>
            <person name="Winnett E."/>
            <person name="Zhong W.-W."/>
            <person name="Zollner A."/>
            <person name="Vo D.H."/>
            <person name="Hani J."/>
        </authorList>
    </citation>
    <scope>NUCLEOTIDE SEQUENCE [LARGE SCALE GENOMIC DNA]</scope>
    <source>
        <strain>ATCC 204508 / S288c</strain>
    </source>
</reference>
<reference key="2">
    <citation type="journal article" date="2014" name="G3 (Bethesda)">
        <title>The reference genome sequence of Saccharomyces cerevisiae: Then and now.</title>
        <authorList>
            <person name="Engel S.R."/>
            <person name="Dietrich F.S."/>
            <person name="Fisk D.G."/>
            <person name="Binkley G."/>
            <person name="Balakrishnan R."/>
            <person name="Costanzo M.C."/>
            <person name="Dwight S.S."/>
            <person name="Hitz B.C."/>
            <person name="Karra K."/>
            <person name="Nash R.S."/>
            <person name="Weng S."/>
            <person name="Wong E.D."/>
            <person name="Lloyd P."/>
            <person name="Skrzypek M.S."/>
            <person name="Miyasato S.R."/>
            <person name="Simison M."/>
            <person name="Cherry J.M."/>
        </authorList>
    </citation>
    <scope>GENOME REANNOTATION</scope>
    <source>
        <strain>ATCC 204508 / S288c</strain>
    </source>
</reference>
<reference key="3">
    <citation type="journal article" date="2000" name="Mol. Biol. Cell">
        <title>Identification of novel, evolutionarily conserved Cdc42p-interacting proteins and of redundant pathways linking Cdc24p and Cdc42p to actin polarization in yeast.</title>
        <authorList>
            <person name="Bi E."/>
            <person name="Chiavetta J.B."/>
            <person name="Chen H."/>
            <person name="Chen G.-C."/>
            <person name="Chan C.S.M."/>
            <person name="Pringle J.R."/>
        </authorList>
    </citation>
    <scope>FUNCTION</scope>
</reference>
<reference key="4">
    <citation type="journal article" date="2002" name="J. Biol. Chem.">
        <title>Significance of GTP hydrolysis in Ypt1p-regulated endoplasmic reticulum to Golgi transport revealed by the analysis of two novel Ypt1-GAPs.</title>
        <authorList>
            <person name="De Antoni A."/>
            <person name="Schmitzova J."/>
            <person name="Trepte H.-H."/>
            <person name="Gallwitz D."/>
            <person name="Albert S."/>
        </authorList>
    </citation>
    <scope>FUNCTION</scope>
    <scope>SUBCELLULAR LOCATION</scope>
    <scope>MUTAGENESIS OF ARG-496</scope>
</reference>
<reference key="5">
    <citation type="journal article" date="2003" name="Nature">
        <title>Global analysis of protein localization in budding yeast.</title>
        <authorList>
            <person name="Huh W.-K."/>
            <person name="Falvo J.V."/>
            <person name="Gerke L.C."/>
            <person name="Carroll A.S."/>
            <person name="Howson R.W."/>
            <person name="Weissman J.S."/>
            <person name="O'Shea E.K."/>
        </authorList>
    </citation>
    <scope>SUBCELLULAR LOCATION [LARGE SCALE ANALYSIS]</scope>
</reference>
<reference key="6">
    <citation type="journal article" date="2003" name="Nature">
        <title>Global analysis of protein expression in yeast.</title>
        <authorList>
            <person name="Ghaemmaghami S."/>
            <person name="Huh W.-K."/>
            <person name="Bower K."/>
            <person name="Howson R.W."/>
            <person name="Belle A."/>
            <person name="Dephoure N."/>
            <person name="O'Shea E.K."/>
            <person name="Weissman J.S."/>
        </authorList>
    </citation>
    <scope>LEVEL OF PROTEIN EXPRESSION [LARGE SCALE ANALYSIS]</scope>
</reference>
<reference key="7">
    <citation type="journal article" date="2004" name="J. Cell Sci.">
        <title>Gyp5p and Gyl1p are involved in the control of polarized exocytosis in budding yeast.</title>
        <authorList>
            <person name="Chesneau L."/>
            <person name="Dupre S."/>
            <person name="Burdina A."/>
            <person name="Roger J."/>
            <person name="Le Panse S."/>
            <person name="Jacquet M."/>
            <person name="Cuif M.-H."/>
        </authorList>
    </citation>
    <scope>FUNCTION</scope>
    <scope>SUBCELLULAR LOCATION</scope>
    <scope>PHOSPHORYLATION</scope>
    <scope>INTERACTION WITH GYL1</scope>
    <scope>IDENTIFICATION IN SEC4-CONTAINING COMPLEXES</scope>
</reference>
<reference key="8">
    <citation type="journal article" date="2005" name="Genetics">
        <title>Interaction of the Saccharomyces cerevisiae cortical actin patch protein Rvs167p with proteins involved in ER to Golgi vesicle trafficking.</title>
        <authorList>
            <person name="Friesen H."/>
            <person name="Colwill K."/>
            <person name="Robertson K."/>
            <person name="Schub O."/>
            <person name="Andrews B."/>
        </authorList>
    </citation>
    <scope>FUNCTION</scope>
    <scope>INTERACTION WITH GYL1 AND RVS167</scope>
</reference>
<reference key="9">
    <citation type="journal article" date="2007" name="J. Proteome Res.">
        <title>Large-scale phosphorylation analysis of alpha-factor-arrested Saccharomyces cerevisiae.</title>
        <authorList>
            <person name="Li X."/>
            <person name="Gerber S.A."/>
            <person name="Rudner A.D."/>
            <person name="Beausoleil S.A."/>
            <person name="Haas W."/>
            <person name="Villen J."/>
            <person name="Elias J.E."/>
            <person name="Gygi S.P."/>
        </authorList>
    </citation>
    <scope>IDENTIFICATION BY MASS SPECTROMETRY [LARGE SCALE ANALYSIS]</scope>
    <source>
        <strain>ADR376</strain>
    </source>
</reference>
<reference key="10">
    <citation type="journal article" date="2007" name="Proc. Natl. Acad. Sci. U.S.A.">
        <title>Analysis of phosphorylation sites on proteins from Saccharomyces cerevisiae by electron transfer dissociation (ETD) mass spectrometry.</title>
        <authorList>
            <person name="Chi A."/>
            <person name="Huttenhower C."/>
            <person name="Geer L.Y."/>
            <person name="Coon J.J."/>
            <person name="Syka J.E.P."/>
            <person name="Bai D.L."/>
            <person name="Shabanowitz J."/>
            <person name="Burke D.J."/>
            <person name="Troyanskaya O.G."/>
            <person name="Hunt D.F."/>
        </authorList>
    </citation>
    <scope>IDENTIFICATION BY MASS SPECTROMETRY [LARGE SCALE ANALYSIS]</scope>
</reference>
<reference key="11">
    <citation type="journal article" date="2008" name="Mol. Cell. Proteomics">
        <title>A multidimensional chromatography technology for in-depth phosphoproteome analysis.</title>
        <authorList>
            <person name="Albuquerque C.P."/>
            <person name="Smolka M.B."/>
            <person name="Payne S.H."/>
            <person name="Bafna V."/>
            <person name="Eng J."/>
            <person name="Zhou H."/>
        </authorList>
    </citation>
    <scope>PHOSPHORYLATION [LARGE SCALE ANALYSIS] AT SER-30 AND SER-389</scope>
    <scope>IDENTIFICATION BY MASS SPECTROMETRY [LARGE SCALE ANALYSIS]</scope>
</reference>
<reference key="12">
    <citation type="journal article" date="2009" name="Science">
        <title>Global analysis of Cdk1 substrate phosphorylation sites provides insights into evolution.</title>
        <authorList>
            <person name="Holt L.J."/>
            <person name="Tuch B.B."/>
            <person name="Villen J."/>
            <person name="Johnson A.D."/>
            <person name="Gygi S.P."/>
            <person name="Morgan D.O."/>
        </authorList>
    </citation>
    <scope>PHOSPHORYLATION [LARGE SCALE ANALYSIS] AT SER-25 AND THR-89</scope>
    <scope>IDENTIFICATION BY MASS SPECTROMETRY [LARGE SCALE ANALYSIS]</scope>
</reference>
<keyword id="KW-0175">Coiled coil</keyword>
<keyword id="KW-0963">Cytoplasm</keyword>
<keyword id="KW-0931">ER-Golgi transport</keyword>
<keyword id="KW-0268">Exocytosis</keyword>
<keyword id="KW-0343">GTPase activation</keyword>
<keyword id="KW-0597">Phosphoprotein</keyword>
<keyword id="KW-0653">Protein transport</keyword>
<keyword id="KW-1185">Reference proteome</keyword>
<keyword id="KW-0813">Transport</keyword>
<dbReference type="EMBL" id="Z73605">
    <property type="protein sequence ID" value="CAA97970.1"/>
    <property type="molecule type" value="Genomic_DNA"/>
</dbReference>
<dbReference type="EMBL" id="Z67751">
    <property type="protein sequence ID" value="CAA91595.1"/>
    <property type="molecule type" value="Genomic_DNA"/>
</dbReference>
<dbReference type="EMBL" id="BK006949">
    <property type="protein sequence ID" value="DAA11188.1"/>
    <property type="molecule type" value="Genomic_DNA"/>
</dbReference>
<dbReference type="PIR" id="S61015">
    <property type="entry name" value="S61015"/>
</dbReference>
<dbReference type="RefSeq" id="NP_015075.1">
    <property type="nucleotide sequence ID" value="NM_001184063.1"/>
</dbReference>
<dbReference type="SMR" id="Q12344"/>
<dbReference type="BioGRID" id="35914">
    <property type="interactions" value="95"/>
</dbReference>
<dbReference type="DIP" id="DIP-8946N"/>
<dbReference type="FunCoup" id="Q12344">
    <property type="interactions" value="244"/>
</dbReference>
<dbReference type="IntAct" id="Q12344">
    <property type="interactions" value="7"/>
</dbReference>
<dbReference type="MINT" id="Q12344"/>
<dbReference type="STRING" id="4932.YPL249C"/>
<dbReference type="iPTMnet" id="Q12344"/>
<dbReference type="PaxDb" id="4932-YPL249C"/>
<dbReference type="PeptideAtlas" id="Q12344"/>
<dbReference type="PRIDE" id="Q12344"/>
<dbReference type="EnsemblFungi" id="YPL249C_mRNA">
    <property type="protein sequence ID" value="YPL249C"/>
    <property type="gene ID" value="YPL249C"/>
</dbReference>
<dbReference type="GeneID" id="855827"/>
<dbReference type="KEGG" id="sce:YPL249C"/>
<dbReference type="AGR" id="SGD:S000006170"/>
<dbReference type="SGD" id="S000006170">
    <property type="gene designation" value="GYP5"/>
</dbReference>
<dbReference type="VEuPathDB" id="FungiDB:YPL249C"/>
<dbReference type="eggNOG" id="KOG1102">
    <property type="taxonomic scope" value="Eukaryota"/>
</dbReference>
<dbReference type="GeneTree" id="ENSGT00940000168693"/>
<dbReference type="HOGENOM" id="CLU_005350_11_0_1"/>
<dbReference type="InParanoid" id="Q12344"/>
<dbReference type="OMA" id="LFVHDAM"/>
<dbReference type="OrthoDB" id="295078at2759"/>
<dbReference type="BioCyc" id="YEAST:G3O-34135-MONOMER"/>
<dbReference type="BioGRID-ORCS" id="855827">
    <property type="hits" value="0 hits in 10 CRISPR screens"/>
</dbReference>
<dbReference type="PRO" id="PR:Q12344"/>
<dbReference type="Proteomes" id="UP000002311">
    <property type="component" value="Chromosome XVI"/>
</dbReference>
<dbReference type="RNAct" id="Q12344">
    <property type="molecule type" value="protein"/>
</dbReference>
<dbReference type="GO" id="GO:0005935">
    <property type="term" value="C:cellular bud neck"/>
    <property type="evidence" value="ECO:0000314"/>
    <property type="project" value="SGD"/>
</dbReference>
<dbReference type="GO" id="GO:0005934">
    <property type="term" value="C:cellular bud tip"/>
    <property type="evidence" value="ECO:0000314"/>
    <property type="project" value="SGD"/>
</dbReference>
<dbReference type="GO" id="GO:0005737">
    <property type="term" value="C:cytoplasm"/>
    <property type="evidence" value="ECO:0007005"/>
    <property type="project" value="SGD"/>
</dbReference>
<dbReference type="GO" id="GO:0005829">
    <property type="term" value="C:cytosol"/>
    <property type="evidence" value="ECO:0000314"/>
    <property type="project" value="SGD"/>
</dbReference>
<dbReference type="GO" id="GO:0005798">
    <property type="term" value="C:Golgi-associated vesicle"/>
    <property type="evidence" value="ECO:0000314"/>
    <property type="project" value="SGD"/>
</dbReference>
<dbReference type="GO" id="GO:0000131">
    <property type="term" value="C:incipient cellular bud site"/>
    <property type="evidence" value="ECO:0000314"/>
    <property type="project" value="SGD"/>
</dbReference>
<dbReference type="GO" id="GO:0043332">
    <property type="term" value="C:mating projection tip"/>
    <property type="evidence" value="ECO:0000314"/>
    <property type="project" value="SGD"/>
</dbReference>
<dbReference type="GO" id="GO:0005886">
    <property type="term" value="C:plasma membrane"/>
    <property type="evidence" value="ECO:0000314"/>
    <property type="project" value="SGD"/>
</dbReference>
<dbReference type="GO" id="GO:0005096">
    <property type="term" value="F:GTPase activator activity"/>
    <property type="evidence" value="ECO:0000315"/>
    <property type="project" value="SGD"/>
</dbReference>
<dbReference type="GO" id="GO:0006888">
    <property type="term" value="P:endoplasmic reticulum to Golgi vesicle-mediated transport"/>
    <property type="evidence" value="ECO:0000315"/>
    <property type="project" value="SGD"/>
</dbReference>
<dbReference type="GO" id="GO:0006887">
    <property type="term" value="P:exocytosis"/>
    <property type="evidence" value="ECO:0007669"/>
    <property type="project" value="UniProtKB-KW"/>
</dbReference>
<dbReference type="GO" id="GO:0015031">
    <property type="term" value="P:protein transport"/>
    <property type="evidence" value="ECO:0007669"/>
    <property type="project" value="UniProtKB-KW"/>
</dbReference>
<dbReference type="GO" id="GO:0016192">
    <property type="term" value="P:vesicle-mediated transport"/>
    <property type="evidence" value="ECO:0000315"/>
    <property type="project" value="SGD"/>
</dbReference>
<dbReference type="FunFam" id="1.10.10.750:FF:000017">
    <property type="entry name" value="GTPase-activating protein"/>
    <property type="match status" value="1"/>
</dbReference>
<dbReference type="FunFam" id="1.10.472.80:FF:000044">
    <property type="entry name" value="GTPase-activating protein GYP5"/>
    <property type="match status" value="1"/>
</dbReference>
<dbReference type="Gene3D" id="1.10.8.270">
    <property type="entry name" value="putative rabgap domain of human tbc1 domain family member 14 like domains"/>
    <property type="match status" value="1"/>
</dbReference>
<dbReference type="Gene3D" id="1.10.10.750">
    <property type="entry name" value="Ypt/Rab-GAP domain of gyp1p, domain 1"/>
    <property type="match status" value="1"/>
</dbReference>
<dbReference type="Gene3D" id="1.10.472.80">
    <property type="entry name" value="Ypt/Rab-GAP domain of gyp1p, domain 3"/>
    <property type="match status" value="1"/>
</dbReference>
<dbReference type="InterPro" id="IPR000195">
    <property type="entry name" value="Rab-GAP-TBC_dom"/>
</dbReference>
<dbReference type="InterPro" id="IPR035969">
    <property type="entry name" value="Rab-GAP_TBC_sf"/>
</dbReference>
<dbReference type="InterPro" id="IPR050302">
    <property type="entry name" value="Rab_GAP_TBC_domain"/>
</dbReference>
<dbReference type="PANTHER" id="PTHR47219:SF9">
    <property type="entry name" value="GTPASE ACTIVATING PROTEIN AND CENTROSOME-ASSOCIATED, ISOFORM B"/>
    <property type="match status" value="1"/>
</dbReference>
<dbReference type="PANTHER" id="PTHR47219">
    <property type="entry name" value="RAB GTPASE-ACTIVATING PROTEIN 1-LIKE"/>
    <property type="match status" value="1"/>
</dbReference>
<dbReference type="Pfam" id="PF23436">
    <property type="entry name" value="RabGap-TBC_2"/>
    <property type="match status" value="1"/>
</dbReference>
<dbReference type="SMART" id="SM00164">
    <property type="entry name" value="TBC"/>
    <property type="match status" value="1"/>
</dbReference>
<dbReference type="SUPFAM" id="SSF47923">
    <property type="entry name" value="Ypt/Rab-GAP domain of gyp1p"/>
    <property type="match status" value="2"/>
</dbReference>
<dbReference type="PROSITE" id="PS50086">
    <property type="entry name" value="TBC_RABGAP"/>
    <property type="match status" value="1"/>
</dbReference>
<comment type="function">
    <text evidence="4 5 7 8">GTPase-activating protein which accelerates the GTP hydrolysis rate of YPT1 and SEC4. Involved in ER to Golgi trafficking and polarized exocytosis.</text>
</comment>
<comment type="subunit">
    <text evidence="7 8">Interacts with GYL1 and RVS167; and is part of SEC4-containing complexes.</text>
</comment>
<comment type="interaction">
    <interactant intactId="EBI-38508">
        <id>Q12344</id>
    </interactant>
    <interactant intactId="EBI-27427">
        <id>Q04322</id>
        <label>GYL1</label>
    </interactant>
    <organismsDiffer>false</organismsDiffer>
    <experiments>3</experiments>
</comment>
<comment type="interaction">
    <interactant intactId="EBI-38508">
        <id>Q12344</id>
    </interactant>
    <interactant intactId="EBI-22980">
        <id>P43603</id>
        <label>LSB3</label>
    </interactant>
    <organismsDiffer>false</organismsDiffer>
    <experiments>3</experiments>
</comment>
<comment type="interaction">
    <interactant intactId="EBI-38508">
        <id>Q12344</id>
    </interactant>
    <interactant intactId="EBI-14500">
        <id>P39743</id>
        <label>RVS167</label>
    </interactant>
    <organismsDiffer>false</organismsDiffer>
    <experiments>6</experiments>
</comment>
<comment type="interaction">
    <interactant intactId="EBI-38508">
        <id>Q12344</id>
    </interactant>
    <interactant intactId="EBI-24460">
        <id>P32793</id>
        <label>YSC84</label>
    </interactant>
    <organismsDiffer>false</organismsDiffer>
    <experiments>2</experiments>
</comment>
<comment type="subcellular location">
    <subcellularLocation>
        <location>Cytoplasm</location>
    </subcellularLocation>
    <subcellularLocation>
        <location>Bud</location>
    </subcellularLocation>
    <subcellularLocation>
        <location>Bud neck</location>
    </subcellularLocation>
</comment>
<comment type="miscellaneous">
    <text evidence="6">Present with 1940 molecules/cell in log phase SD medium.</text>
</comment>
<comment type="similarity">
    <text evidence="9">Belongs to the GYP5 family.</text>
</comment>
<name>GYP5_YEAST</name>
<gene>
    <name type="primary">GYP5</name>
    <name type="ordered locus">YPL249C</name>
</gene>
<proteinExistence type="evidence at protein level"/>
<feature type="chain" id="PRO_0000240365" description="GTPase-activating protein GYP5">
    <location>
        <begin position="1"/>
        <end position="894"/>
    </location>
</feature>
<feature type="domain" description="Rab-GAP TBC" evidence="2">
    <location>
        <begin position="451"/>
        <end position="630"/>
    </location>
</feature>
<feature type="region of interest" description="Disordered" evidence="3">
    <location>
        <begin position="1"/>
        <end position="324"/>
    </location>
</feature>
<feature type="coiled-coil region" evidence="1">
    <location>
        <begin position="732"/>
        <end position="872"/>
    </location>
</feature>
<feature type="compositionally biased region" description="Basic and acidic residues" evidence="3">
    <location>
        <begin position="1"/>
        <end position="23"/>
    </location>
</feature>
<feature type="compositionally biased region" description="Basic and acidic residues" evidence="3">
    <location>
        <begin position="134"/>
        <end position="164"/>
    </location>
</feature>
<feature type="compositionally biased region" description="Polar residues" evidence="3">
    <location>
        <begin position="184"/>
        <end position="200"/>
    </location>
</feature>
<feature type="compositionally biased region" description="Polar residues" evidence="3">
    <location>
        <begin position="268"/>
        <end position="279"/>
    </location>
</feature>
<feature type="modified residue" description="Phosphoserine" evidence="11">
    <location>
        <position position="25"/>
    </location>
</feature>
<feature type="modified residue" description="Phosphoserine" evidence="10">
    <location>
        <position position="30"/>
    </location>
</feature>
<feature type="modified residue" description="Phosphothreonine" evidence="11">
    <location>
        <position position="89"/>
    </location>
</feature>
<feature type="modified residue" description="Phosphoserine" evidence="10">
    <location>
        <position position="389"/>
    </location>
</feature>
<feature type="mutagenesis site" description="Loss of GAP activity." evidence="5">
    <original>R</original>
    <variation>A</variation>
    <variation>K</variation>
    <location>
        <position position="496"/>
    </location>
</feature>
<protein>
    <recommendedName>
        <fullName>GTPase-activating protein GYP5</fullName>
    </recommendedName>
</protein>
<sequence>MSSDKSIEKNTDTIASEVHEGDNHSNNLGSMEEEIKSTPSDQYEEIAIIPTEPLHSDKELNDKQQSLGHEAPTNVSREEPIGISGDEDTQITEQNVNEQRQETREPSSEIDLNEPLDVEKDVTTDVQAPNGLNIEKEYDAVKENEKVYADTKEVVSSPENREVTGKNSGGEKSSSSKFLDDESGTTTAANANDISISSEVTPERSSENDNNQIHITNEVAAGINLNENKEQKAAIEDGPVTAENLSSETARKVPPIPTQIINEKGDNSSENEVSAIPTTSSPPLPPRQNVATSTSPKLPPRGKQREQPPKTKNAVPPPLEEEMKSEKFRKNFEETKRNSYHHVPLTGSKTAQLESTAEINLIASRYRKTSHHLNKEGEETRESLQEGQSFLKSTFTSFLENLSEYNEVENVNEEDREMFKIDWSFWTQVVNDYATVASNEPENLEAHVTNGIPPQIRGIIWQLMANSKSREMEDIYETLLDTECLHEATIRRDLRRTKFVAEDKMESLYKVIKVYSVYDPDVGYTQGMGFIAAPLLINCENEAESFGLLVGLMKNYGLRELFLPGMPGLMLMLYQFDRLLEEHSPSLYNRLIREGISSTMYATQWFLTFFAYKFPLEFVLRIFDIVFVEGIEVLLKFAVNLMLKNEETLVKLRFDELLDFLKDELFNYYLMGNQDDASVVQMGLSNGNSFKGNDDGTFSYNVDLFVHDAMTGVYITPLTLRRYRGEYVEIHEKEQKKEDHYESLRIQNHQLQREAQKLEHDYSILNKENISAANELIQNRLNMEMLLDEKNDLINTITDIKSQIEEEIRKQNLPNPDASLPKADLREDLERTISRNNEVMRENGQLEERITELQAEIDELININKEQVSTASLLERDSKAKGRKGWTGFKKVFK</sequence>
<organism>
    <name type="scientific">Saccharomyces cerevisiae (strain ATCC 204508 / S288c)</name>
    <name type="common">Baker's yeast</name>
    <dbReference type="NCBI Taxonomy" id="559292"/>
    <lineage>
        <taxon>Eukaryota</taxon>
        <taxon>Fungi</taxon>
        <taxon>Dikarya</taxon>
        <taxon>Ascomycota</taxon>
        <taxon>Saccharomycotina</taxon>
        <taxon>Saccharomycetes</taxon>
        <taxon>Saccharomycetales</taxon>
        <taxon>Saccharomycetaceae</taxon>
        <taxon>Saccharomyces</taxon>
    </lineage>
</organism>